<name>TPIS_MESHJ</name>
<gene>
    <name evidence="1" type="primary">tpiA</name>
    <name type="ordered locus">MHJ_0099</name>
</gene>
<keyword id="KW-0963">Cytoplasm</keyword>
<keyword id="KW-0312">Gluconeogenesis</keyword>
<keyword id="KW-0324">Glycolysis</keyword>
<keyword id="KW-0413">Isomerase</keyword>
<comment type="function">
    <text evidence="1">Involved in the gluconeogenesis. Catalyzes stereospecifically the conversion of dihydroxyacetone phosphate (DHAP) to D-glyceraldehyde-3-phosphate (G3P).</text>
</comment>
<comment type="catalytic activity">
    <reaction evidence="1">
        <text>D-glyceraldehyde 3-phosphate = dihydroxyacetone phosphate</text>
        <dbReference type="Rhea" id="RHEA:18585"/>
        <dbReference type="ChEBI" id="CHEBI:57642"/>
        <dbReference type="ChEBI" id="CHEBI:59776"/>
        <dbReference type="EC" id="5.3.1.1"/>
    </reaction>
</comment>
<comment type="pathway">
    <text evidence="1">Carbohydrate biosynthesis; gluconeogenesis.</text>
</comment>
<comment type="pathway">
    <text evidence="1">Carbohydrate degradation; glycolysis; D-glyceraldehyde 3-phosphate from glycerone phosphate: step 1/1.</text>
</comment>
<comment type="subunit">
    <text evidence="1">Homodimer.</text>
</comment>
<comment type="subcellular location">
    <subcellularLocation>
        <location evidence="1">Cytoplasm</location>
    </subcellularLocation>
</comment>
<comment type="similarity">
    <text evidence="1">Belongs to the triosephosphate isomerase family.</text>
</comment>
<protein>
    <recommendedName>
        <fullName evidence="1">Triosephosphate isomerase</fullName>
        <shortName evidence="1">TIM</shortName>
        <shortName evidence="1">TPI</shortName>
        <ecNumber evidence="1">5.3.1.1</ecNumber>
    </recommendedName>
    <alternativeName>
        <fullName evidence="1">Triose-phosphate isomerase</fullName>
    </alternativeName>
</protein>
<accession>Q4AAM8</accession>
<dbReference type="EC" id="5.3.1.1" evidence="1"/>
<dbReference type="EMBL" id="AE017243">
    <property type="protein sequence ID" value="AAZ44193.1"/>
    <property type="molecule type" value="Genomic_DNA"/>
</dbReference>
<dbReference type="RefSeq" id="WP_011206114.1">
    <property type="nucleotide sequence ID" value="NC_007295.1"/>
</dbReference>
<dbReference type="SMR" id="Q4AAM8"/>
<dbReference type="GeneID" id="41334400"/>
<dbReference type="KEGG" id="mhj:MHJ_0099"/>
<dbReference type="eggNOG" id="COG0149">
    <property type="taxonomic scope" value="Bacteria"/>
</dbReference>
<dbReference type="HOGENOM" id="CLU_024251_2_3_14"/>
<dbReference type="OrthoDB" id="9809429at2"/>
<dbReference type="UniPathway" id="UPA00109">
    <property type="reaction ID" value="UER00189"/>
</dbReference>
<dbReference type="UniPathway" id="UPA00138"/>
<dbReference type="Proteomes" id="UP000000548">
    <property type="component" value="Chromosome"/>
</dbReference>
<dbReference type="GO" id="GO:0005829">
    <property type="term" value="C:cytosol"/>
    <property type="evidence" value="ECO:0007669"/>
    <property type="project" value="TreeGrafter"/>
</dbReference>
<dbReference type="GO" id="GO:0004807">
    <property type="term" value="F:triose-phosphate isomerase activity"/>
    <property type="evidence" value="ECO:0007669"/>
    <property type="project" value="UniProtKB-UniRule"/>
</dbReference>
<dbReference type="GO" id="GO:0006094">
    <property type="term" value="P:gluconeogenesis"/>
    <property type="evidence" value="ECO:0007669"/>
    <property type="project" value="UniProtKB-UniRule"/>
</dbReference>
<dbReference type="GO" id="GO:0046166">
    <property type="term" value="P:glyceraldehyde-3-phosphate biosynthetic process"/>
    <property type="evidence" value="ECO:0007669"/>
    <property type="project" value="TreeGrafter"/>
</dbReference>
<dbReference type="GO" id="GO:0019563">
    <property type="term" value="P:glycerol catabolic process"/>
    <property type="evidence" value="ECO:0007669"/>
    <property type="project" value="TreeGrafter"/>
</dbReference>
<dbReference type="GO" id="GO:0006096">
    <property type="term" value="P:glycolytic process"/>
    <property type="evidence" value="ECO:0007669"/>
    <property type="project" value="UniProtKB-UniRule"/>
</dbReference>
<dbReference type="CDD" id="cd00311">
    <property type="entry name" value="TIM"/>
    <property type="match status" value="1"/>
</dbReference>
<dbReference type="FunFam" id="3.20.20.70:FF:000016">
    <property type="entry name" value="Triosephosphate isomerase"/>
    <property type="match status" value="1"/>
</dbReference>
<dbReference type="Gene3D" id="3.20.20.70">
    <property type="entry name" value="Aldolase class I"/>
    <property type="match status" value="1"/>
</dbReference>
<dbReference type="HAMAP" id="MF_00147_B">
    <property type="entry name" value="TIM_B"/>
    <property type="match status" value="1"/>
</dbReference>
<dbReference type="InterPro" id="IPR013785">
    <property type="entry name" value="Aldolase_TIM"/>
</dbReference>
<dbReference type="InterPro" id="IPR035990">
    <property type="entry name" value="TIM_sf"/>
</dbReference>
<dbReference type="InterPro" id="IPR022896">
    <property type="entry name" value="TrioseP_Isoase_bac/euk"/>
</dbReference>
<dbReference type="InterPro" id="IPR000652">
    <property type="entry name" value="Triosephosphate_isomerase"/>
</dbReference>
<dbReference type="InterPro" id="IPR020861">
    <property type="entry name" value="Triosephosphate_isomerase_AS"/>
</dbReference>
<dbReference type="NCBIfam" id="TIGR00419">
    <property type="entry name" value="tim"/>
    <property type="match status" value="1"/>
</dbReference>
<dbReference type="PANTHER" id="PTHR21139">
    <property type="entry name" value="TRIOSEPHOSPHATE ISOMERASE"/>
    <property type="match status" value="1"/>
</dbReference>
<dbReference type="PANTHER" id="PTHR21139:SF42">
    <property type="entry name" value="TRIOSEPHOSPHATE ISOMERASE"/>
    <property type="match status" value="1"/>
</dbReference>
<dbReference type="Pfam" id="PF00121">
    <property type="entry name" value="TIM"/>
    <property type="match status" value="1"/>
</dbReference>
<dbReference type="SUPFAM" id="SSF51351">
    <property type="entry name" value="Triosephosphate isomerase (TIM)"/>
    <property type="match status" value="1"/>
</dbReference>
<dbReference type="PROSITE" id="PS00171">
    <property type="entry name" value="TIM_1"/>
    <property type="match status" value="1"/>
</dbReference>
<dbReference type="PROSITE" id="PS51440">
    <property type="entry name" value="TIM_2"/>
    <property type="match status" value="1"/>
</dbReference>
<proteinExistence type="inferred from homology"/>
<reference key="1">
    <citation type="journal article" date="2005" name="J. Bacteriol.">
        <title>Swine and poultry pathogens: the complete genome sequences of two strains of Mycoplasma hyopneumoniae and a strain of Mycoplasma synoviae.</title>
        <authorList>
            <person name="Vasconcelos A.T.R."/>
            <person name="Ferreira H.B."/>
            <person name="Bizarro C.V."/>
            <person name="Bonatto S.L."/>
            <person name="Carvalho M.O."/>
            <person name="Pinto P.M."/>
            <person name="Almeida D.F."/>
            <person name="Almeida L.G.P."/>
            <person name="Almeida R."/>
            <person name="Alves-Junior L."/>
            <person name="Assuncao E.N."/>
            <person name="Azevedo V.A.C."/>
            <person name="Bogo M.R."/>
            <person name="Brigido M.M."/>
            <person name="Brocchi M."/>
            <person name="Burity H.A."/>
            <person name="Camargo A.A."/>
            <person name="Camargo S.S."/>
            <person name="Carepo M.S."/>
            <person name="Carraro D.M."/>
            <person name="de Mattos Cascardo J.C."/>
            <person name="Castro L.A."/>
            <person name="Cavalcanti G."/>
            <person name="Chemale G."/>
            <person name="Collevatti R.G."/>
            <person name="Cunha C.W."/>
            <person name="Dallagiovanna B."/>
            <person name="Dambros B.P."/>
            <person name="Dellagostin O.A."/>
            <person name="Falcao C."/>
            <person name="Fantinatti-Garboggini F."/>
            <person name="Felipe M.S.S."/>
            <person name="Fiorentin L."/>
            <person name="Franco G.R."/>
            <person name="Freitas N.S.A."/>
            <person name="Frias D."/>
            <person name="Grangeiro T.B."/>
            <person name="Grisard E.C."/>
            <person name="Guimaraes C.T."/>
            <person name="Hungria M."/>
            <person name="Jardim S.N."/>
            <person name="Krieger M.A."/>
            <person name="Laurino J.P."/>
            <person name="Lima L.F.A."/>
            <person name="Lopes M.I."/>
            <person name="Loreto E.L.S."/>
            <person name="Madeira H.M.F."/>
            <person name="Manfio G.P."/>
            <person name="Maranhao A.Q."/>
            <person name="Martinkovics C.T."/>
            <person name="Medeiros S.R.B."/>
            <person name="Moreira M.A.M."/>
            <person name="Neiva M."/>
            <person name="Ramalho-Neto C.E."/>
            <person name="Nicolas M.F."/>
            <person name="Oliveira S.C."/>
            <person name="Paixao R.F.C."/>
            <person name="Pedrosa F.O."/>
            <person name="Pena S.D.J."/>
            <person name="Pereira M."/>
            <person name="Pereira-Ferrari L."/>
            <person name="Piffer I."/>
            <person name="Pinto L.S."/>
            <person name="Potrich D.P."/>
            <person name="Salim A.C.M."/>
            <person name="Santos F.R."/>
            <person name="Schmitt R."/>
            <person name="Schneider M.P.C."/>
            <person name="Schrank A."/>
            <person name="Schrank I.S."/>
            <person name="Schuck A.F."/>
            <person name="Seuanez H.N."/>
            <person name="Silva D.W."/>
            <person name="Silva R."/>
            <person name="Silva S.C."/>
            <person name="Soares C.M.A."/>
            <person name="Souza K.R.L."/>
            <person name="Souza R.C."/>
            <person name="Staats C.C."/>
            <person name="Steffens M.B.R."/>
            <person name="Teixeira S.M.R."/>
            <person name="Urmenyi T.P."/>
            <person name="Vainstein M.H."/>
            <person name="Zuccherato L.W."/>
            <person name="Simpson A.J.G."/>
            <person name="Zaha A."/>
        </authorList>
    </citation>
    <scope>NUCLEOTIDE SEQUENCE [LARGE SCALE GENOMIC DNA]</scope>
    <source>
        <strain>J / ATCC 25934 / NCTC 10110</strain>
    </source>
</reference>
<feature type="chain" id="PRO_0000307512" description="Triosephosphate isomerase">
    <location>
        <begin position="1"/>
        <end position="242"/>
    </location>
</feature>
<feature type="active site" description="Electrophile" evidence="1">
    <location>
        <position position="98"/>
    </location>
</feature>
<feature type="active site" description="Proton acceptor" evidence="1">
    <location>
        <position position="167"/>
    </location>
</feature>
<feature type="binding site" evidence="1">
    <location>
        <begin position="8"/>
        <end position="10"/>
    </location>
    <ligand>
        <name>substrate</name>
    </ligand>
</feature>
<feature type="binding site" evidence="1">
    <location>
        <position position="173"/>
    </location>
    <ligand>
        <name>substrate</name>
    </ligand>
</feature>
<feature type="binding site" evidence="1">
    <location>
        <position position="205"/>
    </location>
    <ligand>
        <name>substrate</name>
    </ligand>
</feature>
<feature type="binding site" evidence="1">
    <location>
        <begin position="226"/>
        <end position="227"/>
    </location>
    <ligand>
        <name>substrate</name>
    </ligand>
</feature>
<organism>
    <name type="scientific">Mesomycoplasma hyopneumoniae (strain J / ATCC 25934 / NCTC 10110)</name>
    <name type="common">Mycoplasma hyopneumoniae</name>
    <dbReference type="NCBI Taxonomy" id="262719"/>
    <lineage>
        <taxon>Bacteria</taxon>
        <taxon>Bacillati</taxon>
        <taxon>Mycoplasmatota</taxon>
        <taxon>Mycoplasmoidales</taxon>
        <taxon>Metamycoplasmataceae</taxon>
        <taxon>Mesomycoplasma</taxon>
    </lineage>
</organism>
<evidence type="ECO:0000255" key="1">
    <source>
        <dbReference type="HAMAP-Rule" id="MF_00147"/>
    </source>
</evidence>
<sequence>MKKIIIGNWKMNKTVSETRDFIQKFDIFYQENVGKIKEDLDFAIAPSFISLSLISKSLTKKLEIAAQNLSQFDSGAFTGEISGKMLQDLGTKYVIIGHSERREIFKEKDEELKNKILQAQKYDLIPVFCVGESLLEFEAGLTKKVIISQINAIKSVLNFQKAIIAYEPIWAIGTGKTATAAIAEKVCGLIKENFGKNTMVIYGGSVNSKNINELVSQKSIDGALVGGASLDPEEFGKILVNS</sequence>